<evidence type="ECO:0000255" key="1">
    <source>
        <dbReference type="HAMAP-Rule" id="MF_01113"/>
    </source>
</evidence>
<gene>
    <name evidence="1" type="primary">dinB</name>
    <name type="ordered locus">SAS1817</name>
</gene>
<dbReference type="EC" id="2.7.7.7" evidence="1"/>
<dbReference type="EMBL" id="BX571857">
    <property type="protein sequence ID" value="CAG43623.1"/>
    <property type="molecule type" value="Genomic_DNA"/>
</dbReference>
<dbReference type="RefSeq" id="WP_000140176.1">
    <property type="nucleotide sequence ID" value="NC_002953.3"/>
</dbReference>
<dbReference type="SMR" id="Q6G838"/>
<dbReference type="KEGG" id="sas:SAS1817"/>
<dbReference type="HOGENOM" id="CLU_012348_1_2_9"/>
<dbReference type="GO" id="GO:0005829">
    <property type="term" value="C:cytosol"/>
    <property type="evidence" value="ECO:0007669"/>
    <property type="project" value="TreeGrafter"/>
</dbReference>
<dbReference type="GO" id="GO:0003684">
    <property type="term" value="F:damaged DNA binding"/>
    <property type="evidence" value="ECO:0007669"/>
    <property type="project" value="InterPro"/>
</dbReference>
<dbReference type="GO" id="GO:0003887">
    <property type="term" value="F:DNA-directed DNA polymerase activity"/>
    <property type="evidence" value="ECO:0007669"/>
    <property type="project" value="UniProtKB-UniRule"/>
</dbReference>
<dbReference type="GO" id="GO:0000287">
    <property type="term" value="F:magnesium ion binding"/>
    <property type="evidence" value="ECO:0007669"/>
    <property type="project" value="UniProtKB-UniRule"/>
</dbReference>
<dbReference type="GO" id="GO:0006261">
    <property type="term" value="P:DNA-templated DNA replication"/>
    <property type="evidence" value="ECO:0007669"/>
    <property type="project" value="UniProtKB-UniRule"/>
</dbReference>
<dbReference type="GO" id="GO:0042276">
    <property type="term" value="P:error-prone translesion synthesis"/>
    <property type="evidence" value="ECO:0007669"/>
    <property type="project" value="TreeGrafter"/>
</dbReference>
<dbReference type="GO" id="GO:0009432">
    <property type="term" value="P:SOS response"/>
    <property type="evidence" value="ECO:0007669"/>
    <property type="project" value="TreeGrafter"/>
</dbReference>
<dbReference type="CDD" id="cd03586">
    <property type="entry name" value="PolY_Pol_IV_kappa"/>
    <property type="match status" value="1"/>
</dbReference>
<dbReference type="FunFam" id="3.30.1490.100:FF:000004">
    <property type="entry name" value="DNA polymerase IV"/>
    <property type="match status" value="1"/>
</dbReference>
<dbReference type="FunFam" id="3.40.1170.60:FF:000001">
    <property type="entry name" value="DNA polymerase IV"/>
    <property type="match status" value="1"/>
</dbReference>
<dbReference type="Gene3D" id="3.30.70.270">
    <property type="match status" value="1"/>
</dbReference>
<dbReference type="Gene3D" id="3.40.1170.60">
    <property type="match status" value="1"/>
</dbReference>
<dbReference type="Gene3D" id="1.10.150.20">
    <property type="entry name" value="5' to 3' exonuclease, C-terminal subdomain"/>
    <property type="match status" value="1"/>
</dbReference>
<dbReference type="Gene3D" id="3.30.1490.100">
    <property type="entry name" value="DNA polymerase, Y-family, little finger domain"/>
    <property type="match status" value="1"/>
</dbReference>
<dbReference type="HAMAP" id="MF_01113">
    <property type="entry name" value="DNApol_IV"/>
    <property type="match status" value="1"/>
</dbReference>
<dbReference type="InterPro" id="IPR043502">
    <property type="entry name" value="DNA/RNA_pol_sf"/>
</dbReference>
<dbReference type="InterPro" id="IPR036775">
    <property type="entry name" value="DNA_pol_Y-fam_lit_finger_sf"/>
</dbReference>
<dbReference type="InterPro" id="IPR017961">
    <property type="entry name" value="DNA_pol_Y-fam_little_finger"/>
</dbReference>
<dbReference type="InterPro" id="IPR050116">
    <property type="entry name" value="DNA_polymerase-Y"/>
</dbReference>
<dbReference type="InterPro" id="IPR022880">
    <property type="entry name" value="DNApol_IV"/>
</dbReference>
<dbReference type="InterPro" id="IPR043128">
    <property type="entry name" value="Rev_trsase/Diguanyl_cyclase"/>
</dbReference>
<dbReference type="InterPro" id="IPR001126">
    <property type="entry name" value="UmuC"/>
</dbReference>
<dbReference type="NCBIfam" id="NF002677">
    <property type="entry name" value="PRK02406.1"/>
    <property type="match status" value="1"/>
</dbReference>
<dbReference type="NCBIfam" id="NF010731">
    <property type="entry name" value="PRK14133.1"/>
    <property type="match status" value="1"/>
</dbReference>
<dbReference type="PANTHER" id="PTHR11076:SF33">
    <property type="entry name" value="DNA POLYMERASE KAPPA"/>
    <property type="match status" value="1"/>
</dbReference>
<dbReference type="PANTHER" id="PTHR11076">
    <property type="entry name" value="DNA REPAIR POLYMERASE UMUC / TRANSFERASE FAMILY MEMBER"/>
    <property type="match status" value="1"/>
</dbReference>
<dbReference type="Pfam" id="PF00817">
    <property type="entry name" value="IMS"/>
    <property type="match status" value="1"/>
</dbReference>
<dbReference type="Pfam" id="PF11799">
    <property type="entry name" value="IMS_C"/>
    <property type="match status" value="1"/>
</dbReference>
<dbReference type="SUPFAM" id="SSF56672">
    <property type="entry name" value="DNA/RNA polymerases"/>
    <property type="match status" value="1"/>
</dbReference>
<dbReference type="SUPFAM" id="SSF100879">
    <property type="entry name" value="Lesion bypass DNA polymerase (Y-family), little finger domain"/>
    <property type="match status" value="1"/>
</dbReference>
<dbReference type="PROSITE" id="PS50173">
    <property type="entry name" value="UMUC"/>
    <property type="match status" value="1"/>
</dbReference>
<accession>Q6G838</accession>
<proteinExistence type="inferred from homology"/>
<reference key="1">
    <citation type="journal article" date="2004" name="Proc. Natl. Acad. Sci. U.S.A.">
        <title>Complete genomes of two clinical Staphylococcus aureus strains: evidence for the rapid evolution of virulence and drug resistance.</title>
        <authorList>
            <person name="Holden M.T.G."/>
            <person name="Feil E.J."/>
            <person name="Lindsay J.A."/>
            <person name="Peacock S.J."/>
            <person name="Day N.P.J."/>
            <person name="Enright M.C."/>
            <person name="Foster T.J."/>
            <person name="Moore C.E."/>
            <person name="Hurst L."/>
            <person name="Atkin R."/>
            <person name="Barron A."/>
            <person name="Bason N."/>
            <person name="Bentley S.D."/>
            <person name="Chillingworth C."/>
            <person name="Chillingworth T."/>
            <person name="Churcher C."/>
            <person name="Clark L."/>
            <person name="Corton C."/>
            <person name="Cronin A."/>
            <person name="Doggett J."/>
            <person name="Dowd L."/>
            <person name="Feltwell T."/>
            <person name="Hance Z."/>
            <person name="Harris B."/>
            <person name="Hauser H."/>
            <person name="Holroyd S."/>
            <person name="Jagels K."/>
            <person name="James K.D."/>
            <person name="Lennard N."/>
            <person name="Line A."/>
            <person name="Mayes R."/>
            <person name="Moule S."/>
            <person name="Mungall K."/>
            <person name="Ormond D."/>
            <person name="Quail M.A."/>
            <person name="Rabbinowitsch E."/>
            <person name="Rutherford K.M."/>
            <person name="Sanders M."/>
            <person name="Sharp S."/>
            <person name="Simmonds M."/>
            <person name="Stevens K."/>
            <person name="Whitehead S."/>
            <person name="Barrell B.G."/>
            <person name="Spratt B.G."/>
            <person name="Parkhill J."/>
        </authorList>
    </citation>
    <scope>NUCLEOTIDE SEQUENCE [LARGE SCALE GENOMIC DNA]</scope>
    <source>
        <strain>MSSA476</strain>
    </source>
</reference>
<protein>
    <recommendedName>
        <fullName evidence="1">DNA polymerase IV</fullName>
        <shortName evidence="1">Pol IV</shortName>
        <ecNumber evidence="1">2.7.7.7</ecNumber>
    </recommendedName>
</protein>
<sequence length="356" mass="40315">MTERRIIHIDMDYFFAQVEMRDNPKLKGKPVIVGGKASSRGVVSTASYEARKYGVHSAMPMSQAHKLCPNGYFVTSNFGAYRETSAQIMSIFRSYTDKVEPMSLDEAYLDITELVRPDLPASKIAQYIRKDILEQTHLTASAGVSYNKFLAKLASGMNKPDGMTVIDYQNVHDILMTLDIGDFPGVGKASKKVMHDNGIFNGRDLYEKTEFELIRLFGKRGRGLYNKARGIDHSEVKSSRVRKSVGTERTFATDVNDDEEILRKVWELSGKTAERLNKLQKSAKTVTVKIKTYQFETLSKQMSLRDSVSSEEDIYNIAYLLYNDLKDPDVPIRLIGVTVGNLEQSTYKNMTIYDFI</sequence>
<comment type="function">
    <text evidence="1">Poorly processive, error-prone DNA polymerase involved in untargeted mutagenesis. Copies undamaged DNA at stalled replication forks, which arise in vivo from mismatched or misaligned primer ends. These misaligned primers can be extended by PolIV. Exhibits no 3'-5' exonuclease (proofreading) activity. May be involved in translesional synthesis, in conjunction with the beta clamp from PolIII.</text>
</comment>
<comment type="catalytic activity">
    <reaction evidence="1">
        <text>DNA(n) + a 2'-deoxyribonucleoside 5'-triphosphate = DNA(n+1) + diphosphate</text>
        <dbReference type="Rhea" id="RHEA:22508"/>
        <dbReference type="Rhea" id="RHEA-COMP:17339"/>
        <dbReference type="Rhea" id="RHEA-COMP:17340"/>
        <dbReference type="ChEBI" id="CHEBI:33019"/>
        <dbReference type="ChEBI" id="CHEBI:61560"/>
        <dbReference type="ChEBI" id="CHEBI:173112"/>
        <dbReference type="EC" id="2.7.7.7"/>
    </reaction>
</comment>
<comment type="cofactor">
    <cofactor evidence="1">
        <name>Mg(2+)</name>
        <dbReference type="ChEBI" id="CHEBI:18420"/>
    </cofactor>
    <text evidence="1">Binds 2 magnesium ions per subunit.</text>
</comment>
<comment type="subunit">
    <text evidence="1">Monomer.</text>
</comment>
<comment type="subcellular location">
    <subcellularLocation>
        <location evidence="1">Cytoplasm</location>
    </subcellularLocation>
</comment>
<comment type="similarity">
    <text evidence="1">Belongs to the DNA polymerase type-Y family.</text>
</comment>
<keyword id="KW-0963">Cytoplasm</keyword>
<keyword id="KW-0227">DNA damage</keyword>
<keyword id="KW-0234">DNA repair</keyword>
<keyword id="KW-0235">DNA replication</keyword>
<keyword id="KW-0238">DNA-binding</keyword>
<keyword id="KW-0239">DNA-directed DNA polymerase</keyword>
<keyword id="KW-0460">Magnesium</keyword>
<keyword id="KW-0479">Metal-binding</keyword>
<keyword id="KW-0515">Mutator protein</keyword>
<keyword id="KW-0548">Nucleotidyltransferase</keyword>
<keyword id="KW-0808">Transferase</keyword>
<feature type="chain" id="PRO_0000173947" description="DNA polymerase IV">
    <location>
        <begin position="1"/>
        <end position="356"/>
    </location>
</feature>
<feature type="domain" description="UmuC" evidence="1">
    <location>
        <begin position="6"/>
        <end position="187"/>
    </location>
</feature>
<feature type="active site" evidence="1">
    <location>
        <position position="106"/>
    </location>
</feature>
<feature type="binding site" evidence="1">
    <location>
        <position position="10"/>
    </location>
    <ligand>
        <name>Mg(2+)</name>
        <dbReference type="ChEBI" id="CHEBI:18420"/>
    </ligand>
</feature>
<feature type="binding site" evidence="1">
    <location>
        <position position="105"/>
    </location>
    <ligand>
        <name>Mg(2+)</name>
        <dbReference type="ChEBI" id="CHEBI:18420"/>
    </ligand>
</feature>
<feature type="site" description="Substrate discrimination" evidence="1">
    <location>
        <position position="15"/>
    </location>
</feature>
<organism>
    <name type="scientific">Staphylococcus aureus (strain MSSA476)</name>
    <dbReference type="NCBI Taxonomy" id="282459"/>
    <lineage>
        <taxon>Bacteria</taxon>
        <taxon>Bacillati</taxon>
        <taxon>Bacillota</taxon>
        <taxon>Bacilli</taxon>
        <taxon>Bacillales</taxon>
        <taxon>Staphylococcaceae</taxon>
        <taxon>Staphylococcus</taxon>
    </lineage>
</organism>
<name>DPO4_STAAS</name>